<name>INTG_BPPF1</name>
<dbReference type="EMBL" id="X52107">
    <property type="protein sequence ID" value="CAA36336.1"/>
    <property type="status" value="ALT_TERM"/>
    <property type="molecule type" value="Genomic_DNA"/>
</dbReference>
<dbReference type="PIR" id="S15148">
    <property type="entry name" value="S15148"/>
</dbReference>
<dbReference type="SMR" id="Q38067"/>
<dbReference type="KEGG" id="vg:1260707"/>
<dbReference type="OrthoDB" id="3956at10239"/>
<dbReference type="Proteomes" id="UP000002121">
    <property type="component" value="Genome"/>
</dbReference>
<dbReference type="GO" id="GO:0003677">
    <property type="term" value="F:DNA binding"/>
    <property type="evidence" value="ECO:0007669"/>
    <property type="project" value="UniProtKB-KW"/>
</dbReference>
<dbReference type="GO" id="GO:0004519">
    <property type="term" value="F:endonuclease activity"/>
    <property type="evidence" value="ECO:0007669"/>
    <property type="project" value="UniProtKB-KW"/>
</dbReference>
<dbReference type="GO" id="GO:0046872">
    <property type="term" value="F:metal ion binding"/>
    <property type="evidence" value="ECO:0007669"/>
    <property type="project" value="UniProtKB-KW"/>
</dbReference>
<dbReference type="GO" id="GO:0015074">
    <property type="term" value="P:DNA integration"/>
    <property type="evidence" value="ECO:0007669"/>
    <property type="project" value="UniProtKB-KW"/>
</dbReference>
<dbReference type="GO" id="GO:0006310">
    <property type="term" value="P:DNA recombination"/>
    <property type="evidence" value="ECO:0007669"/>
    <property type="project" value="UniProtKB-KW"/>
</dbReference>
<dbReference type="GO" id="GO:0075713">
    <property type="term" value="P:establishment of integrated proviral latency"/>
    <property type="evidence" value="ECO:0007669"/>
    <property type="project" value="UniProtKB-KW"/>
</dbReference>
<dbReference type="GO" id="GO:0046718">
    <property type="term" value="P:symbiont entry into host cell"/>
    <property type="evidence" value="ECO:0007669"/>
    <property type="project" value="UniProtKB-KW"/>
</dbReference>
<dbReference type="GO" id="GO:0044826">
    <property type="term" value="P:viral genome integration into host DNA"/>
    <property type="evidence" value="ECO:0007669"/>
    <property type="project" value="UniProtKB-KW"/>
</dbReference>
<dbReference type="CDD" id="cd00796">
    <property type="entry name" value="INT_Rci_Hp1_C"/>
    <property type="match status" value="1"/>
</dbReference>
<dbReference type="Gene3D" id="1.10.443.10">
    <property type="entry name" value="Intergrase catalytic core"/>
    <property type="match status" value="1"/>
</dbReference>
<dbReference type="InterPro" id="IPR044068">
    <property type="entry name" value="CB"/>
</dbReference>
<dbReference type="InterPro" id="IPR011010">
    <property type="entry name" value="DNA_brk_join_enz"/>
</dbReference>
<dbReference type="InterPro" id="IPR013762">
    <property type="entry name" value="Integrase-like_cat_sf"/>
</dbReference>
<dbReference type="InterPro" id="IPR002104">
    <property type="entry name" value="Integrase_catalytic"/>
</dbReference>
<dbReference type="InterPro" id="IPR050090">
    <property type="entry name" value="Tyrosine_recombinase_XerCD"/>
</dbReference>
<dbReference type="PANTHER" id="PTHR30349:SF93">
    <property type="entry name" value="FELS-2 PROPHAGE PROTEIN"/>
    <property type="match status" value="1"/>
</dbReference>
<dbReference type="PANTHER" id="PTHR30349">
    <property type="entry name" value="PHAGE INTEGRASE-RELATED"/>
    <property type="match status" value="1"/>
</dbReference>
<dbReference type="Pfam" id="PF24624">
    <property type="entry name" value="Int_N"/>
    <property type="match status" value="1"/>
</dbReference>
<dbReference type="Pfam" id="PF00589">
    <property type="entry name" value="Phage_integrase"/>
    <property type="match status" value="1"/>
</dbReference>
<dbReference type="SUPFAM" id="SSF56349">
    <property type="entry name" value="DNA breaking-rejoining enzymes"/>
    <property type="match status" value="1"/>
</dbReference>
<dbReference type="PROSITE" id="PS51900">
    <property type="entry name" value="CB"/>
    <property type="match status" value="1"/>
</dbReference>
<dbReference type="PROSITE" id="PS51898">
    <property type="entry name" value="TYR_RECOMBINASE"/>
    <property type="match status" value="1"/>
</dbReference>
<accession>Q38067</accession>
<protein>
    <recommendedName>
        <fullName>Putative integrase</fullName>
    </recommendedName>
</protein>
<reference key="1">
    <citation type="journal article" date="1991" name="J. Mol. Biol.">
        <title>DNA sequence of the filamentous bacteriophage Pf1.</title>
        <authorList>
            <person name="Hill D.F."/>
            <person name="Short N.J."/>
            <person name="Perham R.N."/>
            <person name="Petersen G.B."/>
        </authorList>
    </citation>
    <scope>NUCLEOTIDE SEQUENCE [GENOMIC DNA]</scope>
</reference>
<evidence type="ECO:0000255" key="1">
    <source>
        <dbReference type="PROSITE-ProRule" id="PRU01246"/>
    </source>
</evidence>
<evidence type="ECO:0000255" key="2">
    <source>
        <dbReference type="PROSITE-ProRule" id="PRU01248"/>
    </source>
</evidence>
<sequence length="333" mass="38067">MTVRKDGKTWTADFYENGRSGRRIRKKGFATKSAAIRYEQDFFAVKGETGRPLDDRLSDLVKVWYDLHGCTLKDGKQRLARCEALAKRLGNPLAFEFDSLAWARYRQRRLTEVKPETVNHEQRYLSAVFSELIRLGSWHKENPLGKVRQIKTDQVELTFLSLDQVARLLEECKASTNNHTYPVALLCLATGARWEEAESLTRGAVHGGKVHYHRIKNRQSRSVPIPDELERLIFKVGMPGSGRLFMSCRAAFRCAYQRCGFQTPGQMTHILRHTFASHYMMGGGDILTLQRILGHSSITMTMRYAHLSPEHLASAMSLSPLYQIKHFASQVHQ</sequence>
<comment type="function">
    <text>This protein may encode an integrase, which is necessary for integration of the viral DNA into host genome.</text>
</comment>
<comment type="similarity">
    <text evidence="1">Belongs to the 'phage' integrase family.</text>
</comment>
<keyword id="KW-0229">DNA integration</keyword>
<keyword id="KW-0233">DNA recombination</keyword>
<keyword id="KW-0238">DNA-binding</keyword>
<keyword id="KW-0255">Endonuclease</keyword>
<keyword id="KW-0378">Hydrolase</keyword>
<keyword id="KW-0479">Metal-binding</keyword>
<keyword id="KW-0540">Nuclease</keyword>
<keyword id="KW-1185">Reference proteome</keyword>
<keyword id="KW-1179">Viral genome integration</keyword>
<keyword id="KW-1160">Virus entry into host cell</keyword>
<organism>
    <name type="scientific">Pseudomonas phage Pf1</name>
    <name type="common">Bacteriophage Pf1</name>
    <dbReference type="NCBI Taxonomy" id="2011081"/>
    <lineage>
        <taxon>Viruses</taxon>
        <taxon>Monodnaviria</taxon>
        <taxon>Loebvirae</taxon>
        <taxon>Hofneiviricota</taxon>
        <taxon>Faserviricetes</taxon>
        <taxon>Tubulavirales</taxon>
        <taxon>Inoviridae</taxon>
        <taxon>Primolicivirus</taxon>
    </lineage>
</organism>
<feature type="chain" id="PRO_0000378352" description="Putative integrase">
    <location>
        <begin position="1"/>
        <end position="333"/>
    </location>
</feature>
<feature type="domain" description="Core-binding (CB)" evidence="2">
    <location>
        <begin position="48"/>
        <end position="133"/>
    </location>
</feature>
<feature type="domain" description="Tyr recombinase" evidence="1">
    <location>
        <begin position="155"/>
        <end position="317"/>
    </location>
</feature>
<feature type="active site" evidence="1">
    <location>
        <position position="193"/>
    </location>
</feature>
<feature type="active site" evidence="1">
    <location>
        <position position="216"/>
    </location>
</feature>
<feature type="active site" evidence="1">
    <location>
        <position position="269"/>
    </location>
</feature>
<feature type="active site" evidence="1">
    <location>
        <position position="272"/>
    </location>
</feature>
<feature type="active site" evidence="1">
    <location>
        <position position="295"/>
    </location>
</feature>
<feature type="active site" description="O-(3'-phospho-DNA)-tyrosine intermediate" evidence="1">
    <location>
        <position position="304"/>
    </location>
</feature>
<proteinExistence type="inferred from homology"/>
<organismHost>
    <name type="scientific">Pseudomonas aeruginosa</name>
    <dbReference type="NCBI Taxonomy" id="287"/>
</organismHost>